<protein>
    <recommendedName>
        <fullName evidence="18">Protein Gawky</fullName>
    </recommendedName>
</protein>
<proteinExistence type="evidence at protein level"/>
<keyword id="KW-0002">3D-structure</keyword>
<keyword id="KW-0025">Alternative splicing</keyword>
<keyword id="KW-0963">Cytoplasm</keyword>
<keyword id="KW-0217">Developmental protein</keyword>
<keyword id="KW-1185">Reference proteome</keyword>
<keyword id="KW-0694">RNA-binding</keyword>
<keyword id="KW-0943">RNA-mediated gene silencing</keyword>
<keyword id="KW-0810">Translation regulation</keyword>
<accession>Q8SY33</accession>
<accession>Q8MSF0</accession>
<accession>Q9V4F1</accession>
<organism>
    <name type="scientific">Drosophila melanogaster</name>
    <name type="common">Fruit fly</name>
    <dbReference type="NCBI Taxonomy" id="7227"/>
    <lineage>
        <taxon>Eukaryota</taxon>
        <taxon>Metazoa</taxon>
        <taxon>Ecdysozoa</taxon>
        <taxon>Arthropoda</taxon>
        <taxon>Hexapoda</taxon>
        <taxon>Insecta</taxon>
        <taxon>Pterygota</taxon>
        <taxon>Neoptera</taxon>
        <taxon>Endopterygota</taxon>
        <taxon>Diptera</taxon>
        <taxon>Brachycera</taxon>
        <taxon>Muscomorpha</taxon>
        <taxon>Ephydroidea</taxon>
        <taxon>Drosophilidae</taxon>
        <taxon>Drosophila</taxon>
        <taxon>Sophophora</taxon>
    </lineage>
</organism>
<sequence>MREALFSQDGWGCQHVNQDTNWEVPSSPEPANKDAPGPPMWKPSINNGTDLWESNLRNGGQPAAQQVPKPSWGHTPSSNLGGTWGEDDDGADSSSVWTGGAVSNAGSGAAVGVNQAGVNVGPGGVVSSGGPQWGQGVVGVGLGSTGGNGSSNITGSSGVATGSSGNSSNAGNGWGDPREIRPLGVGGSMDIRNVEHRGGNGSGATSSDPRDIRMIDPRDPIRGDPRGISGRLNGTSEMWGHHPQMSHNQLQGINKMVGQSVATASTSVGTSGSGIGPGGPGPSTVSGNIPTQWGPAQPVSVGVSGPKDMSKQISGWEEPSPPPQRRSIPNYDDGTSLWGQQTRVPAASGHWKDMTDSIGRSSHLMRGQSQTGGIGIAGVGNSNVPVGANPSNPISSVVGPQARIPSVGGVQHKPDGGAMWVHSGNVGGRNNVAAVTTWGDDTHSVNVGAPSSGSVSSNNWVDDKSNSTLAQNSWSDPAPVGVSWGNKQSKPPSNSASSGWSTAAGVVDGVDLGSEWNTHGGIIGKSQQQQKLAGLNVGMVNVINAEIIKQSKQYRILVENGFKKEDVERALVIANMNIEEAADMLRANSSLSMDGWRRHDESLGSYADHNSSTSSGGFAGRYPVNSGQPSMSFPHNNLMNNMGGTAVTGGNNNTNMTALQVQKYLNQGQHGVAVGPQAVGNSSAVSVGFGQNTSNAAVAGAASVNIAANTNNQPSGQQIRMLGQQIQLAIHSGFISSQILTQPLTQTTLNLLNQLLSNIKHLQAAQQSLTRGGNVNPMAVNVAISKYKQQIQNLQNQINAQQAVYVKQQNMQPTSQQQQPQQQQLPSVHLSNSGNDYLRGHDAINNLQSNFSELNINKPSGYQGASNQQSRLNQWKLPVLDKEINSDSTEFSRAPGATKQNLTANTSNINSLGLQNDSTWSTGRSIGDGWPDPSSDNENKDWSVAQPTSAATAYTDLVQEFEPGKPWKGSQIKSIEDDPSITPGSVARSPLSINSTPKDADIFANTGKNSPTDLPPLSLSSSTWSFNPNQNYPSHSWSDNSQQCTATSELWTSPLNKSSSRGPPPGLTANSNKSANSNASTPTTITGGANGWLQPRSGGVQTTNTNWTGGNTTWGSSWLLLKNLTAQIDGPTLRTLCMQHGPLVSFHPYLNQGIALCKYTTREEANKAQMALNNCVLANTTIFAESPSENEVQSIMQHLPQTPSSTSSSGTSGGNVGGVGTSANNANSGSAACLSGNNSGNGNGSASGAGSGNNGNSSCNNSAAGGGSSSNNTITTVANSNLVGSSGSVSNSSGVTANSSTVSVVSCTASGNSINGAGTANSSGSKSSANNLASGQSSASNLTNSTNSTWRQTSQNQALQSQSRPSGREADFDYISLVYSIVDD</sequence>
<reference key="1">
    <citation type="journal article" date="2000" name="Science">
        <title>The genome sequence of Drosophila melanogaster.</title>
        <authorList>
            <person name="Adams M.D."/>
            <person name="Celniker S.E."/>
            <person name="Holt R.A."/>
            <person name="Evans C.A."/>
            <person name="Gocayne J.D."/>
            <person name="Amanatides P.G."/>
            <person name="Scherer S.E."/>
            <person name="Li P.W."/>
            <person name="Hoskins R.A."/>
            <person name="Galle R.F."/>
            <person name="George R.A."/>
            <person name="Lewis S.E."/>
            <person name="Richards S."/>
            <person name="Ashburner M."/>
            <person name="Henderson S.N."/>
            <person name="Sutton G.G."/>
            <person name="Wortman J.R."/>
            <person name="Yandell M.D."/>
            <person name="Zhang Q."/>
            <person name="Chen L.X."/>
            <person name="Brandon R.C."/>
            <person name="Rogers Y.-H.C."/>
            <person name="Blazej R.G."/>
            <person name="Champe M."/>
            <person name="Pfeiffer B.D."/>
            <person name="Wan K.H."/>
            <person name="Doyle C."/>
            <person name="Baxter E.G."/>
            <person name="Helt G."/>
            <person name="Nelson C.R."/>
            <person name="Miklos G.L.G."/>
            <person name="Abril J.F."/>
            <person name="Agbayani A."/>
            <person name="An H.-J."/>
            <person name="Andrews-Pfannkoch C."/>
            <person name="Baldwin D."/>
            <person name="Ballew R.M."/>
            <person name="Basu A."/>
            <person name="Baxendale J."/>
            <person name="Bayraktaroglu L."/>
            <person name="Beasley E.M."/>
            <person name="Beeson K.Y."/>
            <person name="Benos P.V."/>
            <person name="Berman B.P."/>
            <person name="Bhandari D."/>
            <person name="Bolshakov S."/>
            <person name="Borkova D."/>
            <person name="Botchan M.R."/>
            <person name="Bouck J."/>
            <person name="Brokstein P."/>
            <person name="Brottier P."/>
            <person name="Burtis K.C."/>
            <person name="Busam D.A."/>
            <person name="Butler H."/>
            <person name="Cadieu E."/>
            <person name="Center A."/>
            <person name="Chandra I."/>
            <person name="Cherry J.M."/>
            <person name="Cawley S."/>
            <person name="Dahlke C."/>
            <person name="Davenport L.B."/>
            <person name="Davies P."/>
            <person name="de Pablos B."/>
            <person name="Delcher A."/>
            <person name="Deng Z."/>
            <person name="Mays A.D."/>
            <person name="Dew I."/>
            <person name="Dietz S.M."/>
            <person name="Dodson K."/>
            <person name="Doup L.E."/>
            <person name="Downes M."/>
            <person name="Dugan-Rocha S."/>
            <person name="Dunkov B.C."/>
            <person name="Dunn P."/>
            <person name="Durbin K.J."/>
            <person name="Evangelista C.C."/>
            <person name="Ferraz C."/>
            <person name="Ferriera S."/>
            <person name="Fleischmann W."/>
            <person name="Fosler C."/>
            <person name="Gabrielian A.E."/>
            <person name="Garg N.S."/>
            <person name="Gelbart W.M."/>
            <person name="Glasser K."/>
            <person name="Glodek A."/>
            <person name="Gong F."/>
            <person name="Gorrell J.H."/>
            <person name="Gu Z."/>
            <person name="Guan P."/>
            <person name="Harris M."/>
            <person name="Harris N.L."/>
            <person name="Harvey D.A."/>
            <person name="Heiman T.J."/>
            <person name="Hernandez J.R."/>
            <person name="Houck J."/>
            <person name="Hostin D."/>
            <person name="Houston K.A."/>
            <person name="Howland T.J."/>
            <person name="Wei M.-H."/>
            <person name="Ibegwam C."/>
            <person name="Jalali M."/>
            <person name="Kalush F."/>
            <person name="Karpen G.H."/>
            <person name="Ke Z."/>
            <person name="Kennison J.A."/>
            <person name="Ketchum K.A."/>
            <person name="Kimmel B.E."/>
            <person name="Kodira C.D."/>
            <person name="Kraft C.L."/>
            <person name="Kravitz S."/>
            <person name="Kulp D."/>
            <person name="Lai Z."/>
            <person name="Lasko P."/>
            <person name="Lei Y."/>
            <person name="Levitsky A.A."/>
            <person name="Li J.H."/>
            <person name="Li Z."/>
            <person name="Liang Y."/>
            <person name="Lin X."/>
            <person name="Liu X."/>
            <person name="Mattei B."/>
            <person name="McIntosh T.C."/>
            <person name="McLeod M.P."/>
            <person name="McPherson D."/>
            <person name="Merkulov G."/>
            <person name="Milshina N.V."/>
            <person name="Mobarry C."/>
            <person name="Morris J."/>
            <person name="Moshrefi A."/>
            <person name="Mount S.M."/>
            <person name="Moy M."/>
            <person name="Murphy B."/>
            <person name="Murphy L."/>
            <person name="Muzny D.M."/>
            <person name="Nelson D.L."/>
            <person name="Nelson D.R."/>
            <person name="Nelson K.A."/>
            <person name="Nixon K."/>
            <person name="Nusskern D.R."/>
            <person name="Pacleb J.M."/>
            <person name="Palazzolo M."/>
            <person name="Pittman G.S."/>
            <person name="Pan S."/>
            <person name="Pollard J."/>
            <person name="Puri V."/>
            <person name="Reese M.G."/>
            <person name="Reinert K."/>
            <person name="Remington K."/>
            <person name="Saunders R.D.C."/>
            <person name="Scheeler F."/>
            <person name="Shen H."/>
            <person name="Shue B.C."/>
            <person name="Siden-Kiamos I."/>
            <person name="Simpson M."/>
            <person name="Skupski M.P."/>
            <person name="Smith T.J."/>
            <person name="Spier E."/>
            <person name="Spradling A.C."/>
            <person name="Stapleton M."/>
            <person name="Strong R."/>
            <person name="Sun E."/>
            <person name="Svirskas R."/>
            <person name="Tector C."/>
            <person name="Turner R."/>
            <person name="Venter E."/>
            <person name="Wang A.H."/>
            <person name="Wang X."/>
            <person name="Wang Z.-Y."/>
            <person name="Wassarman D.A."/>
            <person name="Weinstock G.M."/>
            <person name="Weissenbach J."/>
            <person name="Williams S.M."/>
            <person name="Woodage T."/>
            <person name="Worley K.C."/>
            <person name="Wu D."/>
            <person name="Yang S."/>
            <person name="Yao Q.A."/>
            <person name="Ye J."/>
            <person name="Yeh R.-F."/>
            <person name="Zaveri J.S."/>
            <person name="Zhan M."/>
            <person name="Zhang G."/>
            <person name="Zhao Q."/>
            <person name="Zheng L."/>
            <person name="Zheng X.H."/>
            <person name="Zhong F.N."/>
            <person name="Zhong W."/>
            <person name="Zhou X."/>
            <person name="Zhu S.C."/>
            <person name="Zhu X."/>
            <person name="Smith H.O."/>
            <person name="Gibbs R.A."/>
            <person name="Myers E.W."/>
            <person name="Rubin G.M."/>
            <person name="Venter J.C."/>
        </authorList>
    </citation>
    <scope>NUCLEOTIDE SEQUENCE [LARGE SCALE GENOMIC DNA]</scope>
    <source>
        <strain>Berkeley</strain>
    </source>
</reference>
<reference key="2">
    <citation type="journal article" date="2002" name="Genome Biol.">
        <title>Annotation of the Drosophila melanogaster euchromatic genome: a systematic review.</title>
        <authorList>
            <person name="Misra S."/>
            <person name="Crosby M.A."/>
            <person name="Mungall C.J."/>
            <person name="Matthews B.B."/>
            <person name="Campbell K.S."/>
            <person name="Hradecky P."/>
            <person name="Huang Y."/>
            <person name="Kaminker J.S."/>
            <person name="Millburn G.H."/>
            <person name="Prochnik S.E."/>
            <person name="Smith C.D."/>
            <person name="Tupy J.L."/>
            <person name="Whitfield E.J."/>
            <person name="Bayraktaroglu L."/>
            <person name="Berman B.P."/>
            <person name="Bettencourt B.R."/>
            <person name="Celniker S.E."/>
            <person name="de Grey A.D.N.J."/>
            <person name="Drysdale R.A."/>
            <person name="Harris N.L."/>
            <person name="Richter J."/>
            <person name="Russo S."/>
            <person name="Schroeder A.J."/>
            <person name="Shu S.Q."/>
            <person name="Stapleton M."/>
            <person name="Yamada C."/>
            <person name="Ashburner M."/>
            <person name="Gelbart W.M."/>
            <person name="Rubin G.M."/>
            <person name="Lewis S.E."/>
        </authorList>
    </citation>
    <scope>GENOME REANNOTATION</scope>
    <scope>ALTERNATIVE SPLICING</scope>
    <source>
        <strain evidence="5">Berkeley</strain>
    </source>
</reference>
<reference evidence="21" key="3">
    <citation type="journal article" date="2002" name="Genome Biol.">
        <title>A Drosophila full-length cDNA resource.</title>
        <authorList>
            <person name="Stapleton M."/>
            <person name="Carlson J.W."/>
            <person name="Brokstein P."/>
            <person name="Yu C."/>
            <person name="Champe M."/>
            <person name="George R.A."/>
            <person name="Guarin H."/>
            <person name="Kronmiller B."/>
            <person name="Pacleb J.M."/>
            <person name="Park S."/>
            <person name="Wan K.H."/>
            <person name="Rubin G.M."/>
            <person name="Celniker S.E."/>
        </authorList>
    </citation>
    <scope>NUCLEOTIDE SEQUENCE [LARGE SCALE MRNA] (ISOFORM A)</scope>
    <source>
        <strain evidence="21">Berkeley</strain>
        <tissue evidence="4">Embryo</tissue>
        <tissue evidence="4">Ovary</tissue>
    </source>
</reference>
<reference evidence="20" key="4">
    <citation type="journal article" date="2005" name="RNA">
        <title>A crucial role for GW182 and the DCP1:DCP2 decapping complex in miRNA-mediated gene silencing.</title>
        <authorList>
            <person name="Rehwinkel J."/>
            <person name="Behm-Ansmant I."/>
            <person name="Gatfield D."/>
            <person name="Izaurralde E."/>
        </authorList>
    </citation>
    <scope>FUNCTION</scope>
</reference>
<reference evidence="20" key="5">
    <citation type="journal article" date="2006" name="Genes Dev.">
        <title>mRNA degradation by miRNAs and GW182 requires both CCR4:NOT deadenylase and DCP1:DCP2 decapping complexes.</title>
        <authorList>
            <person name="Behm-Ansmant I."/>
            <person name="Rehwinkel J."/>
            <person name="Doerks T."/>
            <person name="Stark A."/>
            <person name="Bork P."/>
            <person name="Izaurralde E."/>
        </authorList>
    </citation>
    <scope>FUNCTION</scope>
    <scope>INTERACTION WITH AGO1</scope>
    <scope>SUBCELLULAR LOCATION</scope>
</reference>
<reference evidence="20" key="6">
    <citation type="journal article" date="2006" name="J. Cell Biol.">
        <title>Gawky is a component of cytoplasmic mRNA processing bodies required for early Drosophila development.</title>
        <authorList>
            <person name="Schneider M.D."/>
            <person name="Najand N."/>
            <person name="Chaker S."/>
            <person name="Pare J.M."/>
            <person name="Haskins J."/>
            <person name="Hughes S.C."/>
            <person name="Hobman T.C."/>
            <person name="Locke J."/>
            <person name="Simmonds A.J."/>
        </authorList>
    </citation>
    <scope>FUNCTION</scope>
    <scope>SUBCELLULAR LOCATION</scope>
    <scope>DEVELOPMENTAL STAGE</scope>
</reference>
<reference evidence="20" key="7">
    <citation type="journal article" date="2008" name="Nat. Struct. Mol. Biol.">
        <title>GW182 interaction with Argonaute is essential for miRNA-mediated translational repression and mRNA decay.</title>
        <authorList>
            <person name="Eulalio A."/>
            <person name="Huntzinger E."/>
            <person name="Izaurralde E."/>
        </authorList>
    </citation>
    <scope>FUNCTION</scope>
    <scope>INTERACTION WITH AGO1</scope>
</reference>
<reference evidence="20" key="8">
    <citation type="journal article" date="2009" name="Mol. Cell. Biol.">
        <title>The silencing domain of GW182 interacts with PABPC1 to promote translational repression and degradation of microRNA targets and is required for target release.</title>
        <authorList>
            <person name="Zekri L."/>
            <person name="Huntzinger E."/>
            <person name="Heimstadt S."/>
            <person name="Izaurralde E."/>
        </authorList>
    </citation>
    <scope>FUNCTION</scope>
    <scope>INTERACTION WITH PABP</scope>
</reference>
<reference evidence="20" key="9">
    <citation type="journal article" date="2009" name="RNA">
        <title>Multiple independent domains of dGW182 function in miRNA-mediated repression in Drosophila.</title>
        <authorList>
            <person name="Chekulaeva M."/>
            <person name="Filipowicz W."/>
            <person name="Parker R."/>
        </authorList>
    </citation>
    <scope>REGIONS SUFFICIENT FOR MIRNA-MEDIATED SILENCING</scope>
</reference>
<reference key="10">
    <citation type="journal article" date="2009" name="RNA">
        <title>Characterization of the miRNA-RISC loading complex and miRNA-RISC formed in the Drosophila miRNA pathway.</title>
        <authorList>
            <person name="Miyoshi K."/>
            <person name="Okada T.N."/>
            <person name="Siomi H."/>
            <person name="Siomi M.C."/>
        </authorList>
    </citation>
    <scope>IDENTIFICATION IN THE MIRNA-RNA-INDUCED SILENCING COMPLEX</scope>
</reference>
<reference evidence="20" key="11">
    <citation type="journal article" date="2009" name="RNA">
        <title>A C-terminal silencing domain in GW182 is essential for miRNA function.</title>
        <authorList>
            <person name="Eulalio A."/>
            <person name="Helms S."/>
            <person name="Fritzsch C."/>
            <person name="Fauser M."/>
            <person name="Izaurralde E."/>
        </authorList>
    </citation>
    <scope>REGIONS REQUIRED FOR INTERACTION WITH AGO1 AND MIRNA-MEDIATED SILENCING</scope>
    <scope>ROLE OF UBA DOMAIN</scope>
</reference>
<reference evidence="20" key="12">
    <citation type="journal article" date="2010" name="Nucleic Acids Res.">
        <title>The GW/WG repeats of Drosophila GW182 function as effector motifs for miRNA-mediated repression.</title>
        <authorList>
            <person name="Chekulaeva M."/>
            <person name="Parker R."/>
            <person name="Filipowicz W."/>
        </authorList>
    </citation>
    <scope>REGIONS REQUIRED FOR INTERACTION WITH AGO1 AND MIRNA-MEDIATED SILENCING</scope>
</reference>
<reference evidence="20" key="13">
    <citation type="journal article" date="2011" name="Mol. Cell">
        <title>GW182 proteins directly recruit cytoplasmic deadenylase complexes to miRNA targets.</title>
        <authorList>
            <person name="Braun J.E."/>
            <person name="Huntzinger E."/>
            <person name="Fauser M."/>
            <person name="Izaurralde E."/>
        </authorList>
    </citation>
    <scope>FUNCTION</scope>
    <scope>INTERACTION WITH CCR4-NOT AND PAN COMPLEXES</scope>
</reference>
<reference evidence="20 23" key="14">
    <citation type="journal article" date="2009" name="Nucleic Acids Res.">
        <title>The RRM domain in GW182 proteins contributes to miRNA-mediated gene silencing.</title>
        <authorList>
            <person name="Eulalio A."/>
            <person name="Tritschler F."/>
            <person name="Buttner R."/>
            <person name="Weichenrieder O."/>
            <person name="Izaurralde E."/>
            <person name="Truffault V."/>
        </authorList>
    </citation>
    <scope>STRUCTURE BY NMR OF 1114-1198</scope>
    <scope>ROLE OF RRM DOMAIN</scope>
</reference>
<dbReference type="EMBL" id="AE014135">
    <property type="protein sequence ID" value="AAF59322.2"/>
    <property type="molecule type" value="Genomic_DNA"/>
</dbReference>
<dbReference type="EMBL" id="AE014135">
    <property type="protein sequence ID" value="AAF59323.2"/>
    <property type="molecule type" value="Genomic_DNA"/>
</dbReference>
<dbReference type="EMBL" id="AE014135">
    <property type="protein sequence ID" value="AAN06507.2"/>
    <property type="molecule type" value="Genomic_DNA"/>
</dbReference>
<dbReference type="EMBL" id="AE014135">
    <property type="protein sequence ID" value="AAN06508.1"/>
    <property type="molecule type" value="Genomic_DNA"/>
</dbReference>
<dbReference type="EMBL" id="AE014135">
    <property type="protein sequence ID" value="AAN06509.1"/>
    <property type="molecule type" value="Genomic_DNA"/>
</dbReference>
<dbReference type="EMBL" id="AE014135">
    <property type="protein sequence ID" value="AAX52511.2"/>
    <property type="molecule type" value="Genomic_DNA"/>
</dbReference>
<dbReference type="EMBL" id="AY075429">
    <property type="protein sequence ID" value="AAL68245.1"/>
    <property type="molecule type" value="mRNA"/>
</dbReference>
<dbReference type="EMBL" id="AY118860">
    <property type="protein sequence ID" value="AAM50720.1"/>
    <property type="status" value="ALT_INIT"/>
    <property type="molecule type" value="mRNA"/>
</dbReference>
<dbReference type="RefSeq" id="NP_001014691.2">
    <molecule id="Q8SY33-3"/>
    <property type="nucleotide sequence ID" value="NM_001014691.3"/>
</dbReference>
<dbReference type="RefSeq" id="NP_726596.1">
    <molecule id="Q8SY33-1"/>
    <property type="nucleotide sequence ID" value="NM_166780.2"/>
</dbReference>
<dbReference type="RefSeq" id="NP_726597.1">
    <molecule id="Q8SY33-1"/>
    <property type="nucleotide sequence ID" value="NM_166781.2"/>
</dbReference>
<dbReference type="RefSeq" id="NP_726599.2">
    <property type="nucleotide sequence ID" value="NM_166783.2"/>
</dbReference>
<dbReference type="RefSeq" id="NP_726600.1">
    <molecule id="Q8SY33-1"/>
    <property type="nucleotide sequence ID" value="NM_166784.2"/>
</dbReference>
<dbReference type="RefSeq" id="NP_726601.1">
    <molecule id="Q8SY33-1"/>
    <property type="nucleotide sequence ID" value="NM_166785.2"/>
</dbReference>
<dbReference type="PDB" id="2WBR">
    <property type="method" value="NMR"/>
    <property type="chains" value="A=1114-1198"/>
</dbReference>
<dbReference type="PDBsum" id="2WBR"/>
<dbReference type="SMR" id="Q8SY33"/>
<dbReference type="BioGRID" id="68639">
    <property type="interactions" value="23"/>
</dbReference>
<dbReference type="ComplexPortal" id="CPX-2733">
    <property type="entry name" value="miRNA RISC complex"/>
</dbReference>
<dbReference type="DIP" id="DIP-35525N"/>
<dbReference type="ELM" id="Q8SY33"/>
<dbReference type="FunCoup" id="Q8SY33">
    <property type="interactions" value="664"/>
</dbReference>
<dbReference type="IntAct" id="Q8SY33">
    <property type="interactions" value="20"/>
</dbReference>
<dbReference type="MINT" id="Q8SY33"/>
<dbReference type="STRING" id="7227.FBpp0088169"/>
<dbReference type="PaxDb" id="7227-FBpp0088165"/>
<dbReference type="ABCD" id="Q8SY33">
    <property type="antibodies" value="14 sequenced antibodies"/>
</dbReference>
<dbReference type="DNASU" id="43808"/>
<dbReference type="EnsemblMetazoa" id="FBtr0089096">
    <molecule id="Q8SY33-1"/>
    <property type="protein sequence ID" value="FBpp0088165"/>
    <property type="gene ID" value="FBgn0051992"/>
</dbReference>
<dbReference type="EnsemblMetazoa" id="FBtr0089097">
    <molecule id="Q8SY33-1"/>
    <property type="protein sequence ID" value="FBpp0088166"/>
    <property type="gene ID" value="FBgn0051992"/>
</dbReference>
<dbReference type="EnsemblMetazoa" id="FBtr0089100">
    <molecule id="Q8SY33-1"/>
    <property type="protein sequence ID" value="FBpp0088169"/>
    <property type="gene ID" value="FBgn0051992"/>
</dbReference>
<dbReference type="EnsemblMetazoa" id="FBtr0089101">
    <molecule id="Q8SY33-1"/>
    <property type="protein sequence ID" value="FBpp0088170"/>
    <property type="gene ID" value="FBgn0051992"/>
</dbReference>
<dbReference type="EnsemblMetazoa" id="FBtr0310543">
    <molecule id="Q8SY33-3"/>
    <property type="protein sequence ID" value="FBpp0302680"/>
    <property type="gene ID" value="FBgn0051992"/>
</dbReference>
<dbReference type="GeneID" id="43808"/>
<dbReference type="KEGG" id="dme:Dmel_CG31992"/>
<dbReference type="UCSC" id="CG31992-RA">
    <molecule id="Q8SY33-1"/>
    <property type="organism name" value="d. melanogaster"/>
</dbReference>
<dbReference type="AGR" id="FB:FBgn0051992"/>
<dbReference type="CTD" id="43808"/>
<dbReference type="FlyBase" id="FBgn0051992">
    <property type="gene designation" value="gw"/>
</dbReference>
<dbReference type="VEuPathDB" id="VectorBase:FBgn0051992"/>
<dbReference type="eggNOG" id="ENOG502QWFQ">
    <property type="taxonomic scope" value="Eukaryota"/>
</dbReference>
<dbReference type="InParanoid" id="Q8SY33"/>
<dbReference type="OMA" id="DSQANTW"/>
<dbReference type="OrthoDB" id="5919166at2759"/>
<dbReference type="PhylomeDB" id="Q8SY33"/>
<dbReference type="Reactome" id="R-DME-426496">
    <property type="pathway name" value="Post-transcriptional silencing by small RNAs"/>
</dbReference>
<dbReference type="Reactome" id="R-DME-5578749">
    <property type="pathway name" value="Transcriptional regulation by small RNAs"/>
</dbReference>
<dbReference type="SignaLink" id="Q8SY33"/>
<dbReference type="BioGRID-ORCS" id="43808">
    <property type="hits" value="1 hit in 3 CRISPR screens"/>
</dbReference>
<dbReference type="CD-CODE" id="A6E1D014">
    <property type="entry name" value="P-body"/>
</dbReference>
<dbReference type="ChiTaRS" id="gw">
    <property type="organism name" value="fly"/>
</dbReference>
<dbReference type="EvolutionaryTrace" id="Q8SY33"/>
<dbReference type="GenomeRNAi" id="43808"/>
<dbReference type="PRO" id="PR:Q8SY33"/>
<dbReference type="Proteomes" id="UP000000803">
    <property type="component" value="Chromosome 4"/>
</dbReference>
<dbReference type="Bgee" id="FBgn0051992">
    <property type="expression patterns" value="Expressed in indirect flight muscle cell (Drosophila) in body wall and 288 other cell types or tissues"/>
</dbReference>
<dbReference type="GO" id="GO:0005737">
    <property type="term" value="C:cytoplasm"/>
    <property type="evidence" value="ECO:0000314"/>
    <property type="project" value="FlyBase"/>
</dbReference>
<dbReference type="GO" id="GO:0005654">
    <property type="term" value="C:nucleoplasm"/>
    <property type="evidence" value="ECO:0000318"/>
    <property type="project" value="GO_Central"/>
</dbReference>
<dbReference type="GO" id="GO:0000932">
    <property type="term" value="C:P-body"/>
    <property type="evidence" value="ECO:0000314"/>
    <property type="project" value="FlyBase"/>
</dbReference>
<dbReference type="GO" id="GO:0016442">
    <property type="term" value="C:RISC complex"/>
    <property type="evidence" value="ECO:0000353"/>
    <property type="project" value="FlyBase"/>
</dbReference>
<dbReference type="GO" id="GO:0003723">
    <property type="term" value="F:RNA binding"/>
    <property type="evidence" value="ECO:0007669"/>
    <property type="project" value="UniProtKB-KW"/>
</dbReference>
<dbReference type="GO" id="GO:0061158">
    <property type="term" value="P:3'-UTR-mediated mRNA destabilization"/>
    <property type="evidence" value="ECO:0000314"/>
    <property type="project" value="FlyBase"/>
</dbReference>
<dbReference type="GO" id="GO:0001700">
    <property type="term" value="P:embryonic development via the syncytial blastoderm"/>
    <property type="evidence" value="ECO:0000314"/>
    <property type="project" value="FlyBase"/>
</dbReference>
<dbReference type="GO" id="GO:0045475">
    <property type="term" value="P:locomotor rhythm"/>
    <property type="evidence" value="ECO:0000315"/>
    <property type="project" value="FlyBase"/>
</dbReference>
<dbReference type="GO" id="GO:0035278">
    <property type="term" value="P:miRNA-mediated gene silencing by inhibition of translation"/>
    <property type="evidence" value="ECO:0007669"/>
    <property type="project" value="InterPro"/>
</dbReference>
<dbReference type="GO" id="GO:0035195">
    <property type="term" value="P:miRNA-mediated post-transcriptional gene silencing"/>
    <property type="evidence" value="ECO:0000315"/>
    <property type="project" value="UniProtKB"/>
</dbReference>
<dbReference type="GO" id="GO:0006402">
    <property type="term" value="P:mRNA catabolic process"/>
    <property type="evidence" value="ECO:0000315"/>
    <property type="project" value="FlyBase"/>
</dbReference>
<dbReference type="GO" id="GO:0010629">
    <property type="term" value="P:negative regulation of gene expression"/>
    <property type="evidence" value="ECO:0000314"/>
    <property type="project" value="FlyBase"/>
</dbReference>
<dbReference type="GO" id="GO:0060213">
    <property type="term" value="P:positive regulation of nuclear-transcribed mRNA poly(A) tail shortening"/>
    <property type="evidence" value="ECO:0000318"/>
    <property type="project" value="GO_Central"/>
</dbReference>
<dbReference type="GO" id="GO:0032880">
    <property type="term" value="P:regulation of protein localization"/>
    <property type="evidence" value="ECO:0000315"/>
    <property type="project" value="UniProtKB"/>
</dbReference>
<dbReference type="CDD" id="cd12435">
    <property type="entry name" value="RRM_GW182_like"/>
    <property type="match status" value="1"/>
</dbReference>
<dbReference type="CDD" id="cd14284">
    <property type="entry name" value="UBA_GAWKY"/>
    <property type="match status" value="1"/>
</dbReference>
<dbReference type="FunFam" id="3.30.70.330:FF:000011">
    <property type="entry name" value="trinucleotide repeat-containing gene 6A protein-like"/>
    <property type="match status" value="1"/>
</dbReference>
<dbReference type="Gene3D" id="3.30.70.330">
    <property type="match status" value="1"/>
</dbReference>
<dbReference type="Gene3D" id="1.10.8.10">
    <property type="entry name" value="DNA helicase RuvA subunit, C-terminal domain"/>
    <property type="match status" value="1"/>
</dbReference>
<dbReference type="InterPro" id="IPR019486">
    <property type="entry name" value="Argonaute_hook_dom"/>
</dbReference>
<dbReference type="InterPro" id="IPR041971">
    <property type="entry name" value="Gawky_UBA"/>
</dbReference>
<dbReference type="InterPro" id="IPR052068">
    <property type="entry name" value="GW182_domain"/>
</dbReference>
<dbReference type="InterPro" id="IPR026805">
    <property type="entry name" value="GW182_M_dom"/>
</dbReference>
<dbReference type="InterPro" id="IPR033503">
    <property type="entry name" value="GW182_RRM"/>
</dbReference>
<dbReference type="InterPro" id="IPR012677">
    <property type="entry name" value="Nucleotide-bd_a/b_plait_sf"/>
</dbReference>
<dbReference type="InterPro" id="IPR035979">
    <property type="entry name" value="RBD_domain_sf"/>
</dbReference>
<dbReference type="InterPro" id="IPR015940">
    <property type="entry name" value="UBA"/>
</dbReference>
<dbReference type="InterPro" id="IPR009060">
    <property type="entry name" value="UBA-like_sf"/>
</dbReference>
<dbReference type="PANTHER" id="PTHR13020:SF25">
    <property type="entry name" value="PROTEIN GAWKY"/>
    <property type="match status" value="1"/>
</dbReference>
<dbReference type="PANTHER" id="PTHR13020">
    <property type="entry name" value="TRINUCLEOTIDE REPEAT-CONTAINING GENE 6"/>
    <property type="match status" value="1"/>
</dbReference>
<dbReference type="Pfam" id="PF10427">
    <property type="entry name" value="Ago_hook"/>
    <property type="match status" value="1"/>
</dbReference>
<dbReference type="Pfam" id="PF12938">
    <property type="entry name" value="M_domain"/>
    <property type="match status" value="1"/>
</dbReference>
<dbReference type="Pfam" id="PF00627">
    <property type="entry name" value="UBA"/>
    <property type="match status" value="1"/>
</dbReference>
<dbReference type="SUPFAM" id="SSF54928">
    <property type="entry name" value="RNA-binding domain, RBD"/>
    <property type="match status" value="1"/>
</dbReference>
<dbReference type="SUPFAM" id="SSF46934">
    <property type="entry name" value="UBA-like"/>
    <property type="match status" value="1"/>
</dbReference>
<dbReference type="PROSITE" id="PS50030">
    <property type="entry name" value="UBA"/>
    <property type="match status" value="1"/>
</dbReference>
<evidence type="ECO:0000255" key="1"/>
<evidence type="ECO:0000255" key="2">
    <source>
        <dbReference type="PROSITE-ProRule" id="PRU00212"/>
    </source>
</evidence>
<evidence type="ECO:0000256" key="3">
    <source>
        <dbReference type="SAM" id="MobiDB-lite"/>
    </source>
</evidence>
<evidence type="ECO:0000269" key="4">
    <source>
    </source>
</evidence>
<evidence type="ECO:0000269" key="5">
    <source>
    </source>
</evidence>
<evidence type="ECO:0000269" key="6">
    <source>
    </source>
</evidence>
<evidence type="ECO:0000269" key="7">
    <source>
    </source>
</evidence>
<evidence type="ECO:0000269" key="8">
    <source>
    </source>
</evidence>
<evidence type="ECO:0000269" key="9">
    <source>
    </source>
</evidence>
<evidence type="ECO:0000269" key="10">
    <source>
    </source>
</evidence>
<evidence type="ECO:0000269" key="11">
    <source>
    </source>
</evidence>
<evidence type="ECO:0000269" key="12">
    <source>
    </source>
</evidence>
<evidence type="ECO:0000269" key="13">
    <source>
    </source>
</evidence>
<evidence type="ECO:0000269" key="14">
    <source>
    </source>
</evidence>
<evidence type="ECO:0000269" key="15">
    <source>
    </source>
</evidence>
<evidence type="ECO:0000269" key="16">
    <source>
    </source>
</evidence>
<evidence type="ECO:0000303" key="17">
    <source>
    </source>
</evidence>
<evidence type="ECO:0000303" key="18">
    <source>
    </source>
</evidence>
<evidence type="ECO:0000303" key="19">
    <source>
    </source>
</evidence>
<evidence type="ECO:0000305" key="20"/>
<evidence type="ECO:0000312" key="21">
    <source>
        <dbReference type="EMBL" id="AAL68245.1"/>
    </source>
</evidence>
<evidence type="ECO:0000312" key="22">
    <source>
        <dbReference type="FlyBase" id="FBgn0051992"/>
    </source>
</evidence>
<evidence type="ECO:0000312" key="23">
    <source>
        <dbReference type="PDB" id="2WBR"/>
    </source>
</evidence>
<evidence type="ECO:0007829" key="24">
    <source>
        <dbReference type="PDB" id="2WBR"/>
    </source>
</evidence>
<name>GAWKY_DROME</name>
<feature type="chain" id="PRO_0000415948" description="Protein Gawky">
    <location>
        <begin position="1"/>
        <end position="1384"/>
    </location>
</feature>
<feature type="domain" description="UBA" evidence="2">
    <location>
        <begin position="547"/>
        <end position="588"/>
    </location>
</feature>
<feature type="domain" description="RRM" evidence="1">
    <location>
        <begin position="1117"/>
        <end position="1189"/>
    </location>
</feature>
<feature type="region of interest" description="Sufficient for miRNA-mediated silencing" evidence="11">
    <location>
        <begin position="1"/>
        <end position="605"/>
    </location>
</feature>
<feature type="region of interest" description="Required for interaction with AGO1" evidence="15">
    <location>
        <begin position="1"/>
        <end position="205"/>
    </location>
</feature>
<feature type="region of interest" description="Disordered" evidence="3">
    <location>
        <begin position="1"/>
        <end position="99"/>
    </location>
</feature>
<feature type="region of interest" description="Disordered" evidence="3">
    <location>
        <begin position="148"/>
        <end position="227"/>
    </location>
</feature>
<feature type="region of interest" description="Minimal N-terminal region required for miRNA-mediated silencing" evidence="15">
    <location>
        <begin position="205"/>
        <end position="490"/>
    </location>
</feature>
<feature type="region of interest" description="Disordered" evidence="3">
    <location>
        <begin position="263"/>
        <end position="335"/>
    </location>
</feature>
<feature type="region of interest" description="Disordered" evidence="3">
    <location>
        <begin position="447"/>
        <end position="501"/>
    </location>
</feature>
<feature type="region of interest" description="Sufficient for miRNA-mediated silencing" evidence="11">
    <location>
        <begin position="605"/>
        <end position="830"/>
    </location>
</feature>
<feature type="region of interest" description="Disordered" evidence="3">
    <location>
        <begin position="607"/>
        <end position="626"/>
    </location>
</feature>
<feature type="region of interest" description="Disordered" evidence="3">
    <location>
        <begin position="809"/>
        <end position="841"/>
    </location>
</feature>
<feature type="region of interest" description="Not required for interaction with AGO1 or miRNAs or for localization to P-bodies but necessary for miRNA-mediated silencing and for interaction with pAbp" evidence="12 14 15">
    <location>
        <begin position="862"/>
        <end position="1115"/>
    </location>
</feature>
<feature type="region of interest" description="Disordered" evidence="3">
    <location>
        <begin position="889"/>
        <end position="942"/>
    </location>
</feature>
<feature type="region of interest" description="Sufficient for miRNA-mediated silencing" evidence="11">
    <location>
        <begin position="940"/>
        <end position="1215"/>
    </location>
</feature>
<feature type="region of interest" description="Disordered" evidence="3">
    <location>
        <begin position="962"/>
        <end position="1022"/>
    </location>
</feature>
<feature type="region of interest" description="Disordered" evidence="3">
    <location>
        <begin position="1052"/>
        <end position="1102"/>
    </location>
</feature>
<feature type="region of interest" description="Disordered" evidence="3">
    <location>
        <begin position="1188"/>
        <end position="1221"/>
    </location>
</feature>
<feature type="region of interest" description="Not required for interaction with AGO1 or miRNAs or for localization to P-bodies but necessary for miRNA-mediated silencing, dissociation from AGO1 and miRNAs and interaction with pAbp" evidence="12 14 15">
    <location>
        <begin position="1200"/>
        <end position="1384"/>
    </location>
</feature>
<feature type="region of interest" description="Disordered" evidence="3">
    <location>
        <begin position="1318"/>
        <end position="1368"/>
    </location>
</feature>
<feature type="compositionally biased region" description="Polar residues" evidence="3">
    <location>
        <begin position="15"/>
        <end position="24"/>
    </location>
</feature>
<feature type="compositionally biased region" description="Low complexity" evidence="3">
    <location>
        <begin position="150"/>
        <end position="171"/>
    </location>
</feature>
<feature type="compositionally biased region" description="Basic and acidic residues" evidence="3">
    <location>
        <begin position="208"/>
        <end position="225"/>
    </location>
</feature>
<feature type="compositionally biased region" description="Polar residues" evidence="3">
    <location>
        <begin position="449"/>
        <end position="475"/>
    </location>
</feature>
<feature type="compositionally biased region" description="Polar residues" evidence="3">
    <location>
        <begin position="485"/>
        <end position="501"/>
    </location>
</feature>
<feature type="compositionally biased region" description="Low complexity" evidence="3">
    <location>
        <begin position="809"/>
        <end position="826"/>
    </location>
</feature>
<feature type="compositionally biased region" description="Polar residues" evidence="3">
    <location>
        <begin position="898"/>
        <end position="924"/>
    </location>
</feature>
<feature type="compositionally biased region" description="Low complexity" evidence="3">
    <location>
        <begin position="1010"/>
        <end position="1022"/>
    </location>
</feature>
<feature type="compositionally biased region" description="Polar residues" evidence="3">
    <location>
        <begin position="1052"/>
        <end position="1061"/>
    </location>
</feature>
<feature type="compositionally biased region" description="Low complexity" evidence="3">
    <location>
        <begin position="1068"/>
        <end position="1084"/>
    </location>
</feature>
<feature type="compositionally biased region" description="Polar residues" evidence="3">
    <location>
        <begin position="1188"/>
        <end position="1203"/>
    </location>
</feature>
<feature type="compositionally biased region" description="Gly residues" evidence="3">
    <location>
        <begin position="1211"/>
        <end position="1220"/>
    </location>
</feature>
<feature type="compositionally biased region" description="Low complexity" evidence="3">
    <location>
        <begin position="1318"/>
        <end position="1349"/>
    </location>
</feature>
<feature type="compositionally biased region" description="Polar residues" evidence="3">
    <location>
        <begin position="1350"/>
        <end position="1365"/>
    </location>
</feature>
<feature type="splice variant" id="VSP_047895" description="In isoform I." evidence="20">
    <location>
        <begin position="969"/>
        <end position="971"/>
    </location>
</feature>
<feature type="splice variant" id="VSP_047896" description="In isoform J." evidence="20">
    <location>
        <begin position="1035"/>
        <end position="1036"/>
    </location>
</feature>
<feature type="strand" evidence="24">
    <location>
        <begin position="1118"/>
        <end position="1122"/>
    </location>
</feature>
<feature type="helix" evidence="24">
    <location>
        <begin position="1131"/>
        <end position="1140"/>
    </location>
</feature>
<feature type="strand" evidence="24">
    <location>
        <begin position="1143"/>
        <end position="1149"/>
    </location>
</feature>
<feature type="turn" evidence="24">
    <location>
        <begin position="1150"/>
        <end position="1153"/>
    </location>
</feature>
<feature type="strand" evidence="24">
    <location>
        <begin position="1154"/>
        <end position="1161"/>
    </location>
</feature>
<feature type="helix" evidence="24">
    <location>
        <begin position="1162"/>
        <end position="1172"/>
    </location>
</feature>
<feature type="strand" evidence="24">
    <location>
        <begin position="1175"/>
        <end position="1177"/>
    </location>
</feature>
<feature type="strand" evidence="24">
    <location>
        <begin position="1180"/>
        <end position="1185"/>
    </location>
</feature>
<feature type="helix" evidence="24">
    <location>
        <begin position="1189"/>
        <end position="1196"/>
    </location>
</feature>
<gene>
    <name evidence="18 22" type="primary">gw</name>
    <name evidence="17" type="synonym">GW182</name>
    <name evidence="22" type="ORF">CG31992</name>
</gene>
<comment type="function">
    <text evidence="6 7 8 9 14 16">Required for gene silencing mediated by micro-RNAs (miRNAs). Silences both polyadenylated and deadenylated mRNAs. Required for miRNA-mediated translational repression and mRNA decay. Not required for miRNA target recognition. Necessary to initiate but not to maintain silencing. Promotes mRNA deadenylation through the recruitment of the CCR4-NOT and PAN complexes and promotes decapping by the DCP1-DCP2 complex. Dissociates from silenced mRNAs after deadenylation. Required for completion of nuclear divisions during early embryonic development.</text>
</comment>
<comment type="subunit">
    <text evidence="7 9 13 14 16">Component of the miRNA-directed RNA-induced silencing complex (miRISC), composed of at least AGO1 and gw, which bind mature miRNAs and targets the selective destruction of homologous RNAs (PubMed:16815998, PubMed:18345015, PubMed:19451544). Interacts (via N-terminal region) with AGO1 (via Piwi domain); the interaction is essential for localization of AGO1 in P-bodies and for miRNA-mediated silencing (PubMed:16815998, PubMed:18345015, PubMed:19451544). Interacts with pAbp/PABPC1; this interaction interferes with the binding of pAbp to eIF4G and is required for miRNA-mediated silencing (PubMed:19797087). Interacts with CCR4-NOT complex members Not1, Rga/NOT2, twin/CCR4, Pop2 and NOT3/5 and with PAN complex members CG8232/PAN2 and CG11486/PAN3 (PubMed:21981923).</text>
</comment>
<comment type="interaction">
    <interactant intactId="EBI-160693">
        <id>Q8SY33</id>
    </interactant>
    <interactant intactId="EBI-105513">
        <id>Q32KD4</id>
        <label>AGO1</label>
    </interactant>
    <organismsDiffer>false</organismsDiffer>
    <experiments>5</experiments>
</comment>
<comment type="interaction">
    <interactant intactId="EBI-160693">
        <id>Q8SY33</id>
    </interactant>
    <interactant intactId="EBI-6512959">
        <id>D3DMN9</id>
        <label>CG11486-RC</label>
    </interactant>
    <organismsDiffer>false</organismsDiffer>
    <experiments>2</experiments>
</comment>
<comment type="interaction">
    <interactant intactId="EBI-160693">
        <id>Q8SY33</id>
    </interactant>
    <interactant intactId="EBI-3428401">
        <id>A8DY81</id>
        <label>Not1</label>
    </interactant>
    <organismsDiffer>false</organismsDiffer>
    <experiments>2</experiments>
</comment>
<comment type="interaction">
    <interactant intactId="EBI-160693">
        <id>Q8SY33</id>
    </interactant>
    <interactant intactId="EBI-103658">
        <id>P21187</id>
        <label>pAbp</label>
    </interactant>
    <organismsDiffer>false</organismsDiffer>
    <experiments>11</experiments>
</comment>
<comment type="interaction">
    <interactant intactId="EBI-160693">
        <id>Q8SY33</id>
    </interactant>
    <interactant intactId="EBI-193297">
        <id>A1Z7K9</id>
        <label>PAN2</label>
    </interactant>
    <organismsDiffer>false</organismsDiffer>
    <experiments>2</experiments>
</comment>
<comment type="subcellular location">
    <subcellularLocation>
        <location evidence="7 8">Cytoplasm</location>
        <location evidence="7 8">P-body</location>
    </subcellularLocation>
</comment>
<comment type="alternative products">
    <event type="alternative splicing"/>
    <isoform>
        <id>Q8SY33-1</id>
        <name>A</name>
        <name>B</name>
        <name>E</name>
        <name>F</name>
        <sequence type="displayed"/>
    </isoform>
    <isoform>
        <id>Q8SY33-2</id>
        <name>I</name>
        <sequence type="described" ref="VSP_047895"/>
    </isoform>
    <isoform>
        <id>Q8SY33-3</id>
        <name>J</name>
        <sequence type="described" ref="VSP_047896"/>
    </isoform>
</comment>
<comment type="developmental stage">
    <text evidence="8">Highest levels are found during early embryonic development until approximately 18 hours and during pupariation.</text>
</comment>
<comment type="domain">
    <text evidence="12">The UBA domain is not required for correct subcellular location, gene silencing or interaction with pAbp.</text>
</comment>
<comment type="domain">
    <text evidence="10 19">The RRM domain lacks RNA-binding properties and does not bind RNA in vitro. It is not required for P-body localization or for interaction with AGO1 or miRNAs but is required for silencing. May play a role in protein-protein interactions.</text>
</comment>
<comment type="similarity">
    <text evidence="1">Belongs to the GW182 family.</text>
</comment>
<comment type="sequence caution" evidence="20">
    <conflict type="erroneous initiation">
        <sequence resource="EMBL-CDS" id="AAM50720"/>
    </conflict>
    <text>Truncated N-terminus.</text>
</comment>